<feature type="chain" id="PRO_0000213753" description="Hydroxymethylglutaryl-CoA synthase 2">
    <location>
        <begin position="1"/>
        <end position="455"/>
    </location>
</feature>
<feature type="active site" description="Proton donor/acceptor" evidence="3">
    <location>
        <position position="86"/>
    </location>
</feature>
<feature type="active site" description="Acyl-thioester intermediate" evidence="3">
    <location>
        <position position="120"/>
    </location>
</feature>
<feature type="active site" description="Proton donor/acceptor" evidence="3">
    <location>
        <position position="255"/>
    </location>
</feature>
<feature type="binding site" evidence="2">
    <location>
        <position position="120"/>
    </location>
    <ligand>
        <name>(3S)-3-hydroxy-3-methylglutaryl-CoA</name>
        <dbReference type="ChEBI" id="CHEBI:43074"/>
    </ligand>
</feature>
<feature type="binding site" evidence="2">
    <location>
        <position position="161"/>
    </location>
    <ligand>
        <name>(3S)-3-hydroxy-3-methylglutaryl-CoA</name>
        <dbReference type="ChEBI" id="CHEBI:43074"/>
    </ligand>
</feature>
<feature type="binding site" evidence="2">
    <location>
        <position position="211"/>
    </location>
    <ligand>
        <name>(3S)-3-hydroxy-3-methylglutaryl-CoA</name>
        <dbReference type="ChEBI" id="CHEBI:43074"/>
    </ligand>
</feature>
<feature type="binding site" evidence="2">
    <location>
        <position position="255"/>
    </location>
    <ligand>
        <name>(3S)-3-hydroxy-3-methylglutaryl-CoA</name>
        <dbReference type="ChEBI" id="CHEBI:43074"/>
    </ligand>
</feature>
<feature type="binding site" evidence="2">
    <location>
        <position position="264"/>
    </location>
    <ligand>
        <name>(3S)-3-hydroxy-3-methylglutaryl-CoA</name>
        <dbReference type="ChEBI" id="CHEBI:43074"/>
    </ligand>
</feature>
<feature type="binding site" evidence="2">
    <location>
        <position position="329"/>
    </location>
    <ligand>
        <name>(3S)-3-hydroxy-3-methylglutaryl-CoA</name>
        <dbReference type="ChEBI" id="CHEBI:43074"/>
    </ligand>
</feature>
<feature type="binding site" evidence="2">
    <location>
        <position position="363"/>
    </location>
    <ligand>
        <name>(3S)-3-hydroxy-3-methylglutaryl-CoA</name>
        <dbReference type="ChEBI" id="CHEBI:43074"/>
    </ligand>
</feature>
<protein>
    <recommendedName>
        <fullName>Hydroxymethylglutaryl-CoA synthase 2</fullName>
        <shortName>HMG-CoA synthase 2</shortName>
        <ecNumber>2.3.3.10</ecNumber>
    </recommendedName>
    <alternativeName>
        <fullName>3-hydroxy-3-methylglutaryl coenzyme A synthase 2</fullName>
    </alternativeName>
</protein>
<gene>
    <name type="primary">HMGCS-2</name>
</gene>
<keyword id="KW-0444">Lipid biosynthesis</keyword>
<keyword id="KW-0443">Lipid metabolism</keyword>
<keyword id="KW-0752">Steroid biosynthesis</keyword>
<keyword id="KW-0753">Steroid metabolism</keyword>
<keyword id="KW-0756">Sterol biosynthesis</keyword>
<keyword id="KW-1207">Sterol metabolism</keyword>
<keyword id="KW-0808">Transferase</keyword>
<accession>P54870</accession>
<name>HMCS2_BLAGE</name>
<dbReference type="EC" id="2.3.3.10"/>
<dbReference type="EMBL" id="X77516">
    <property type="protein sequence ID" value="CAA54652.1"/>
    <property type="molecule type" value="mRNA"/>
</dbReference>
<dbReference type="PIR" id="A53565">
    <property type="entry name" value="A53565"/>
</dbReference>
<dbReference type="SMR" id="P54870"/>
<dbReference type="BRENDA" id="2.3.3.10">
    <property type="organism ID" value="875"/>
</dbReference>
<dbReference type="UniPathway" id="UPA00058">
    <property type="reaction ID" value="UER00102"/>
</dbReference>
<dbReference type="GO" id="GO:0004421">
    <property type="term" value="F:hydroxymethylglutaryl-CoA synthase activity"/>
    <property type="evidence" value="ECO:0007669"/>
    <property type="project" value="UniProtKB-EC"/>
</dbReference>
<dbReference type="GO" id="GO:0006084">
    <property type="term" value="P:acetyl-CoA metabolic process"/>
    <property type="evidence" value="ECO:0007669"/>
    <property type="project" value="InterPro"/>
</dbReference>
<dbReference type="GO" id="GO:0010142">
    <property type="term" value="P:farnesyl diphosphate biosynthetic process, mevalonate pathway"/>
    <property type="evidence" value="ECO:0007669"/>
    <property type="project" value="InterPro"/>
</dbReference>
<dbReference type="GO" id="GO:0016126">
    <property type="term" value="P:sterol biosynthetic process"/>
    <property type="evidence" value="ECO:0007669"/>
    <property type="project" value="UniProtKB-KW"/>
</dbReference>
<dbReference type="CDD" id="cd00827">
    <property type="entry name" value="init_cond_enzymes"/>
    <property type="match status" value="1"/>
</dbReference>
<dbReference type="FunFam" id="3.40.47.10:FF:000008">
    <property type="entry name" value="3-hydroxy-3-methylglutaryl coenzyme A synthase"/>
    <property type="match status" value="1"/>
</dbReference>
<dbReference type="Gene3D" id="3.40.47.10">
    <property type="match status" value="1"/>
</dbReference>
<dbReference type="InterPro" id="IPR000590">
    <property type="entry name" value="HMG_CoA_synt_AS"/>
</dbReference>
<dbReference type="InterPro" id="IPR013746">
    <property type="entry name" value="HMG_CoA_synt_C_dom"/>
</dbReference>
<dbReference type="InterPro" id="IPR013528">
    <property type="entry name" value="HMG_CoA_synth_N"/>
</dbReference>
<dbReference type="InterPro" id="IPR010122">
    <property type="entry name" value="HMG_CoA_synthase_euk"/>
</dbReference>
<dbReference type="InterPro" id="IPR016039">
    <property type="entry name" value="Thiolase-like"/>
</dbReference>
<dbReference type="NCBIfam" id="TIGR01833">
    <property type="entry name" value="HMG-CoA-S_euk"/>
    <property type="match status" value="1"/>
</dbReference>
<dbReference type="PANTHER" id="PTHR43323">
    <property type="entry name" value="3-HYDROXY-3-METHYLGLUTARYL COENZYME A SYNTHASE"/>
    <property type="match status" value="1"/>
</dbReference>
<dbReference type="PANTHER" id="PTHR43323:SF2">
    <property type="entry name" value="HYDROXYMETHYLGLUTARYL-COA SYNTHASE"/>
    <property type="match status" value="1"/>
</dbReference>
<dbReference type="Pfam" id="PF08540">
    <property type="entry name" value="HMG_CoA_synt_C"/>
    <property type="match status" value="1"/>
</dbReference>
<dbReference type="Pfam" id="PF01154">
    <property type="entry name" value="HMG_CoA_synt_N"/>
    <property type="match status" value="1"/>
</dbReference>
<dbReference type="SUPFAM" id="SSF53901">
    <property type="entry name" value="Thiolase-like"/>
    <property type="match status" value="2"/>
</dbReference>
<dbReference type="PROSITE" id="PS01226">
    <property type="entry name" value="HMG_COA_SYNTHASE"/>
    <property type="match status" value="1"/>
</dbReference>
<organism>
    <name type="scientific">Blattella germanica</name>
    <name type="common">German cockroach</name>
    <name type="synonym">Blatta germanica</name>
    <dbReference type="NCBI Taxonomy" id="6973"/>
    <lineage>
        <taxon>Eukaryota</taxon>
        <taxon>Metazoa</taxon>
        <taxon>Ecdysozoa</taxon>
        <taxon>Arthropoda</taxon>
        <taxon>Hexapoda</taxon>
        <taxon>Insecta</taxon>
        <taxon>Pterygota</taxon>
        <taxon>Neoptera</taxon>
        <taxon>Polyneoptera</taxon>
        <taxon>Dictyoptera</taxon>
        <taxon>Blattodea</taxon>
        <taxon>Blaberoidea</taxon>
        <taxon>Blattellidae</taxon>
        <taxon>Blattella</taxon>
    </lineage>
</organism>
<comment type="function">
    <text evidence="1">This enzyme condenses acetyl-CoA with acetoacetyl-CoA to form HMG-CoA, which is the substrate for HMG-CoA reductase.</text>
</comment>
<comment type="catalytic activity">
    <reaction evidence="3">
        <text>acetoacetyl-CoA + acetyl-CoA + H2O = (3S)-3-hydroxy-3-methylglutaryl-CoA + CoA + H(+)</text>
        <dbReference type="Rhea" id="RHEA:10188"/>
        <dbReference type="ChEBI" id="CHEBI:15377"/>
        <dbReference type="ChEBI" id="CHEBI:15378"/>
        <dbReference type="ChEBI" id="CHEBI:43074"/>
        <dbReference type="ChEBI" id="CHEBI:57286"/>
        <dbReference type="ChEBI" id="CHEBI:57287"/>
        <dbReference type="ChEBI" id="CHEBI:57288"/>
        <dbReference type="EC" id="2.3.3.10"/>
    </reaction>
</comment>
<comment type="pathway">
    <text>Metabolic intermediate biosynthesis; (R)-mevalonate biosynthesis; (R)-mevalonate from acetyl-CoA: step 2/3.</text>
</comment>
<comment type="similarity">
    <text evidence="4">Belongs to the thiolase-like superfamily. HMG-CoA synthase family.</text>
</comment>
<sequence>MAHWPEDVGIIGIEMIFPSLYVDQAELETYDEVSPGKYTMGLGQDKMGVCTDREDINSLCLTAVDKLMERNNIDYNDIGWLEVGTETILDKVKSVKTVLMQLFEESGNTDVEGIDTINACYRGTAALFNALIWIESSSWDGRYAIVVAADIAIYAKECSPTGGAGALLMLIGANAPIVIDRGVRASHMKHAYDFYKPDLMSEYPVVDGKLSVQCYLSALDHCYPRFCSKTEKYLKRCGKENTKIDLDYFDAFVFHSPYCKLVQKSVARLVLNDFIQYPEKYQDLQQLRNLKFEDTYFDRDIEKIFMDKSKQLFEKKTKPSLMLANQVGNMYTTSLYGGLVSLLISEDIGELAGKCICMFSYGSGFAASMFSLHISTDSSPGSTLSRLVTNLTHIKPQVQQRVKLSPGEFENIMEIREQNHHKAPYTPVASPNTLFPGTWYLESIDSMHRRKYKRV</sequence>
<proteinExistence type="evidence at transcript level"/>
<evidence type="ECO:0000250" key="1"/>
<evidence type="ECO:0000250" key="2">
    <source>
        <dbReference type="UniProtKB" id="P54868"/>
    </source>
</evidence>
<evidence type="ECO:0000255" key="3">
    <source>
        <dbReference type="PROSITE-ProRule" id="PRU10116"/>
    </source>
</evidence>
<evidence type="ECO:0000305" key="4"/>
<reference key="1">
    <citation type="journal article" date="1994" name="J. Biol. Chem.">
        <title>Blattella germanica has two HMG-CoA synthase genes. Both are regulated in the ovary during the gonadotrophic cycle.</title>
        <authorList>
            <person name="Buesa C."/>
            <person name="Martinez-Gonzalez J."/>
            <person name="Casals N."/>
            <person name="Haro D."/>
            <person name="Piulachs M.D."/>
            <person name="Belles X."/>
            <person name="Hegardt F.G."/>
        </authorList>
    </citation>
    <scope>NUCLEOTIDE SEQUENCE [MRNA]</scope>
</reference>